<organism>
    <name type="scientific">Shigella dysenteriae serotype 1 (strain Sd197)</name>
    <dbReference type="NCBI Taxonomy" id="300267"/>
    <lineage>
        <taxon>Bacteria</taxon>
        <taxon>Pseudomonadati</taxon>
        <taxon>Pseudomonadota</taxon>
        <taxon>Gammaproteobacteria</taxon>
        <taxon>Enterobacterales</taxon>
        <taxon>Enterobacteriaceae</taxon>
        <taxon>Shigella</taxon>
    </lineage>
</organism>
<feature type="chain" id="PRO_1000064319" description="Protein PsiE">
    <location>
        <begin position="1"/>
        <end position="136"/>
    </location>
</feature>
<feature type="transmembrane region" description="Helical" evidence="1">
    <location>
        <begin position="15"/>
        <end position="35"/>
    </location>
</feature>
<feature type="transmembrane region" description="Helical" evidence="1">
    <location>
        <begin position="55"/>
        <end position="75"/>
    </location>
</feature>
<feature type="transmembrane region" description="Helical" evidence="1">
    <location>
        <begin position="82"/>
        <end position="102"/>
    </location>
</feature>
<feature type="transmembrane region" description="Helical" evidence="1">
    <location>
        <begin position="108"/>
        <end position="128"/>
    </location>
</feature>
<evidence type="ECO:0000255" key="1">
    <source>
        <dbReference type="HAMAP-Rule" id="MF_01048"/>
    </source>
</evidence>
<dbReference type="EMBL" id="CP000034">
    <property type="protein sequence ID" value="ABB64121.1"/>
    <property type="molecule type" value="Genomic_DNA"/>
</dbReference>
<dbReference type="RefSeq" id="WP_000202902.1">
    <property type="nucleotide sequence ID" value="NC_007606.1"/>
</dbReference>
<dbReference type="RefSeq" id="YP_405612.1">
    <property type="nucleotide sequence ID" value="NC_007606.1"/>
</dbReference>
<dbReference type="SMR" id="Q328Y4"/>
<dbReference type="STRING" id="300267.SDY_4218"/>
<dbReference type="EnsemblBacteria" id="ABB64121">
    <property type="protein sequence ID" value="ABB64121"/>
    <property type="gene ID" value="SDY_4218"/>
</dbReference>
<dbReference type="GeneID" id="93777857"/>
<dbReference type="KEGG" id="sdy:SDY_4218"/>
<dbReference type="PATRIC" id="fig|300267.13.peg.4963"/>
<dbReference type="HOGENOM" id="CLU_127561_0_1_6"/>
<dbReference type="Proteomes" id="UP000002716">
    <property type="component" value="Chromosome"/>
</dbReference>
<dbReference type="GO" id="GO:0005886">
    <property type="term" value="C:plasma membrane"/>
    <property type="evidence" value="ECO:0007669"/>
    <property type="project" value="UniProtKB-SubCell"/>
</dbReference>
<dbReference type="GO" id="GO:0016036">
    <property type="term" value="P:cellular response to phosphate starvation"/>
    <property type="evidence" value="ECO:0007669"/>
    <property type="project" value="InterPro"/>
</dbReference>
<dbReference type="HAMAP" id="MF_01048">
    <property type="entry name" value="PsiE"/>
    <property type="match status" value="1"/>
</dbReference>
<dbReference type="InterPro" id="IPR009315">
    <property type="entry name" value="P_starv_induced_PsiE"/>
</dbReference>
<dbReference type="InterPro" id="IPR020948">
    <property type="entry name" value="P_starv_induced_PsiE-like"/>
</dbReference>
<dbReference type="NCBIfam" id="NF002764">
    <property type="entry name" value="PRK02833.1-2"/>
    <property type="match status" value="1"/>
</dbReference>
<dbReference type="NCBIfam" id="NF002765">
    <property type="entry name" value="PRK02833.1-3"/>
    <property type="match status" value="1"/>
</dbReference>
<dbReference type="NCBIfam" id="NF002767">
    <property type="entry name" value="PRK02833.1-5"/>
    <property type="match status" value="1"/>
</dbReference>
<dbReference type="PANTHER" id="PTHR37819">
    <property type="entry name" value="PROTEIN PSIE"/>
    <property type="match status" value="1"/>
</dbReference>
<dbReference type="PANTHER" id="PTHR37819:SF1">
    <property type="entry name" value="PROTEIN PSIE"/>
    <property type="match status" value="1"/>
</dbReference>
<dbReference type="Pfam" id="PF06146">
    <property type="entry name" value="PsiE"/>
    <property type="match status" value="1"/>
</dbReference>
<dbReference type="PIRSF" id="PIRSF029598">
    <property type="entry name" value="PsiE"/>
    <property type="match status" value="1"/>
</dbReference>
<gene>
    <name evidence="1" type="primary">psiE</name>
    <name type="ordered locus">SDY_4218</name>
</gene>
<proteinExistence type="inferred from homology"/>
<keyword id="KW-0997">Cell inner membrane</keyword>
<keyword id="KW-1003">Cell membrane</keyword>
<keyword id="KW-0472">Membrane</keyword>
<keyword id="KW-1185">Reference proteome</keyword>
<keyword id="KW-0812">Transmembrane</keyword>
<keyword id="KW-1133">Transmembrane helix</keyword>
<comment type="subcellular location">
    <subcellularLocation>
        <location evidence="1">Cell inner membrane</location>
        <topology evidence="1">Multi-pass membrane protein</topology>
    </subcellularLocation>
</comment>
<comment type="similarity">
    <text evidence="1">Belongs to the PsiE family.</text>
</comment>
<name>PSIE_SHIDS</name>
<sequence length="136" mass="15597">MTSLSRPRVEFISTILQTVLNLGLLCLGLILVVFLGKETVHLADVLFAPEQTSKYELVEGLVVYFLYFEFIALIVKYFQSGFHFPLRYFVYIGITAIVRLIIVDHKSPLDVLIYSAAILLLVITLWLCNSKRLKRE</sequence>
<protein>
    <recommendedName>
        <fullName evidence="1">Protein PsiE</fullName>
    </recommendedName>
</protein>
<accession>Q328Y4</accession>
<reference key="1">
    <citation type="journal article" date="2005" name="Nucleic Acids Res.">
        <title>Genome dynamics and diversity of Shigella species, the etiologic agents of bacillary dysentery.</title>
        <authorList>
            <person name="Yang F."/>
            <person name="Yang J."/>
            <person name="Zhang X."/>
            <person name="Chen L."/>
            <person name="Jiang Y."/>
            <person name="Yan Y."/>
            <person name="Tang X."/>
            <person name="Wang J."/>
            <person name="Xiong Z."/>
            <person name="Dong J."/>
            <person name="Xue Y."/>
            <person name="Zhu Y."/>
            <person name="Xu X."/>
            <person name="Sun L."/>
            <person name="Chen S."/>
            <person name="Nie H."/>
            <person name="Peng J."/>
            <person name="Xu J."/>
            <person name="Wang Y."/>
            <person name="Yuan Z."/>
            <person name="Wen Y."/>
            <person name="Yao Z."/>
            <person name="Shen Y."/>
            <person name="Qiang B."/>
            <person name="Hou Y."/>
            <person name="Yu J."/>
            <person name="Jin Q."/>
        </authorList>
    </citation>
    <scope>NUCLEOTIDE SEQUENCE [LARGE SCALE GENOMIC DNA]</scope>
    <source>
        <strain>Sd197</strain>
    </source>
</reference>